<comment type="function">
    <text evidence="1">Catalyzes the reversible conversion of ribose-5-phosphate to ribulose 5-phosphate.</text>
</comment>
<comment type="catalytic activity">
    <reaction evidence="1">
        <text>aldehydo-D-ribose 5-phosphate = D-ribulose 5-phosphate</text>
        <dbReference type="Rhea" id="RHEA:14657"/>
        <dbReference type="ChEBI" id="CHEBI:58121"/>
        <dbReference type="ChEBI" id="CHEBI:58273"/>
        <dbReference type="EC" id="5.3.1.6"/>
    </reaction>
</comment>
<comment type="pathway">
    <text evidence="1">Carbohydrate degradation; pentose phosphate pathway; D-ribose 5-phosphate from D-ribulose 5-phosphate (non-oxidative stage): step 1/1.</text>
</comment>
<comment type="subunit">
    <text evidence="1">Homodimer.</text>
</comment>
<comment type="similarity">
    <text evidence="1">Belongs to the ribose 5-phosphate isomerase family.</text>
</comment>
<accession>Q5LZM5</accession>
<name>RPIA_STRT1</name>
<proteinExistence type="inferred from homology"/>
<protein>
    <recommendedName>
        <fullName evidence="1">Ribose-5-phosphate isomerase A</fullName>
        <ecNumber evidence="1">5.3.1.6</ecNumber>
    </recommendedName>
    <alternativeName>
        <fullName evidence="1">Phosphoriboisomerase A</fullName>
        <shortName evidence="1">PRI</shortName>
    </alternativeName>
</protein>
<gene>
    <name evidence="1" type="primary">rpiA</name>
    <name type="ordered locus">str1121</name>
</gene>
<evidence type="ECO:0000255" key="1">
    <source>
        <dbReference type="HAMAP-Rule" id="MF_00170"/>
    </source>
</evidence>
<organism>
    <name type="scientific">Streptococcus thermophilus (strain CNRZ 1066)</name>
    <dbReference type="NCBI Taxonomy" id="299768"/>
    <lineage>
        <taxon>Bacteria</taxon>
        <taxon>Bacillati</taxon>
        <taxon>Bacillota</taxon>
        <taxon>Bacilli</taxon>
        <taxon>Lactobacillales</taxon>
        <taxon>Streptococcaceae</taxon>
        <taxon>Streptococcus</taxon>
    </lineage>
</organism>
<sequence length="226" mass="24312">MDELKKLAGVYAAGFVEDGMVVGLGTGSTAYFFVEEIGRRIKEEGLSVVGVTTSSQTTKQAEGLGIPLKSVDDIDSIDVTVDGADEVDPQLNGIKGGGGALLMEKIVATPTKKYIWVVDESKMVDQLGAFKLPVEVVQYGADRLYLDFESKGYKPSFRVTEQGDRFVTDMKNFIIDLDLGKINNPVALGDELKAMTGVVEHGLFNGMVNKVIVAGKDGVKIVEVKD</sequence>
<reference key="1">
    <citation type="journal article" date="2004" name="Nat. Biotechnol.">
        <title>Complete sequence and comparative genome analysis of the dairy bacterium Streptococcus thermophilus.</title>
        <authorList>
            <person name="Bolotin A."/>
            <person name="Quinquis B."/>
            <person name="Renault P."/>
            <person name="Sorokin A."/>
            <person name="Ehrlich S.D."/>
            <person name="Kulakauskas S."/>
            <person name="Lapidus A."/>
            <person name="Goltsman E."/>
            <person name="Mazur M."/>
            <person name="Pusch G.D."/>
            <person name="Fonstein M."/>
            <person name="Overbeek R."/>
            <person name="Kyprides N."/>
            <person name="Purnelle B."/>
            <person name="Prozzi D."/>
            <person name="Ngui K."/>
            <person name="Masuy D."/>
            <person name="Hancy F."/>
            <person name="Burteau S."/>
            <person name="Boutry M."/>
            <person name="Delcour J."/>
            <person name="Goffeau A."/>
            <person name="Hols P."/>
        </authorList>
    </citation>
    <scope>NUCLEOTIDE SEQUENCE [LARGE SCALE GENOMIC DNA]</scope>
    <source>
        <strain>CNRZ 1066</strain>
    </source>
</reference>
<feature type="chain" id="PRO_0000158480" description="Ribose-5-phosphate isomerase A">
    <location>
        <begin position="1"/>
        <end position="226"/>
    </location>
</feature>
<feature type="active site" description="Proton acceptor" evidence="1">
    <location>
        <position position="104"/>
    </location>
</feature>
<feature type="binding site" evidence="1">
    <location>
        <begin position="26"/>
        <end position="29"/>
    </location>
    <ligand>
        <name>substrate</name>
    </ligand>
</feature>
<feature type="binding site" evidence="1">
    <location>
        <begin position="82"/>
        <end position="85"/>
    </location>
    <ligand>
        <name>substrate</name>
    </ligand>
</feature>
<feature type="binding site" evidence="1">
    <location>
        <begin position="95"/>
        <end position="98"/>
    </location>
    <ligand>
        <name>substrate</name>
    </ligand>
</feature>
<feature type="binding site" evidence="1">
    <location>
        <position position="122"/>
    </location>
    <ligand>
        <name>substrate</name>
    </ligand>
</feature>
<keyword id="KW-0413">Isomerase</keyword>
<dbReference type="EC" id="5.3.1.6" evidence="1"/>
<dbReference type="EMBL" id="CP000024">
    <property type="protein sequence ID" value="AAV62672.1"/>
    <property type="molecule type" value="Genomic_DNA"/>
</dbReference>
<dbReference type="RefSeq" id="WP_011227255.1">
    <property type="nucleotide sequence ID" value="NC_006449.1"/>
</dbReference>
<dbReference type="SMR" id="Q5LZM5"/>
<dbReference type="KEGG" id="stc:str1121"/>
<dbReference type="HOGENOM" id="CLU_056590_1_0_9"/>
<dbReference type="UniPathway" id="UPA00115">
    <property type="reaction ID" value="UER00412"/>
</dbReference>
<dbReference type="GO" id="GO:0004751">
    <property type="term" value="F:ribose-5-phosphate isomerase activity"/>
    <property type="evidence" value="ECO:0007669"/>
    <property type="project" value="UniProtKB-UniRule"/>
</dbReference>
<dbReference type="GO" id="GO:0009052">
    <property type="term" value="P:pentose-phosphate shunt, non-oxidative branch"/>
    <property type="evidence" value="ECO:0007669"/>
    <property type="project" value="UniProtKB-UniRule"/>
</dbReference>
<dbReference type="CDD" id="cd01398">
    <property type="entry name" value="RPI_A"/>
    <property type="match status" value="1"/>
</dbReference>
<dbReference type="FunFam" id="3.40.50.1360:FF:000001">
    <property type="entry name" value="Ribose-5-phosphate isomerase A"/>
    <property type="match status" value="1"/>
</dbReference>
<dbReference type="Gene3D" id="3.30.70.260">
    <property type="match status" value="1"/>
</dbReference>
<dbReference type="Gene3D" id="3.40.50.1360">
    <property type="match status" value="1"/>
</dbReference>
<dbReference type="HAMAP" id="MF_00170">
    <property type="entry name" value="Rib_5P_isom_A"/>
    <property type="match status" value="1"/>
</dbReference>
<dbReference type="InterPro" id="IPR037171">
    <property type="entry name" value="NagB/RpiA_transferase-like"/>
</dbReference>
<dbReference type="InterPro" id="IPR050262">
    <property type="entry name" value="Ribose-5P_isomerase"/>
</dbReference>
<dbReference type="InterPro" id="IPR020672">
    <property type="entry name" value="Ribose5P_isomerase_typA_subgr"/>
</dbReference>
<dbReference type="InterPro" id="IPR004788">
    <property type="entry name" value="Ribose5P_isomerase_type_A"/>
</dbReference>
<dbReference type="NCBIfam" id="NF001924">
    <property type="entry name" value="PRK00702.1"/>
    <property type="match status" value="1"/>
</dbReference>
<dbReference type="NCBIfam" id="TIGR00021">
    <property type="entry name" value="rpiA"/>
    <property type="match status" value="1"/>
</dbReference>
<dbReference type="PANTHER" id="PTHR43748">
    <property type="entry name" value="RIBOSE-5-PHOSPHATE ISOMERASE 3, CHLOROPLASTIC-RELATED"/>
    <property type="match status" value="1"/>
</dbReference>
<dbReference type="PANTHER" id="PTHR43748:SF3">
    <property type="entry name" value="RIBOSE-5-PHOSPHATE ISOMERASE 3, CHLOROPLASTIC-RELATED"/>
    <property type="match status" value="1"/>
</dbReference>
<dbReference type="Pfam" id="PF06026">
    <property type="entry name" value="Rib_5-P_isom_A"/>
    <property type="match status" value="1"/>
</dbReference>
<dbReference type="SUPFAM" id="SSF75445">
    <property type="entry name" value="D-ribose-5-phosphate isomerase (RpiA), lid domain"/>
    <property type="match status" value="1"/>
</dbReference>
<dbReference type="SUPFAM" id="SSF100950">
    <property type="entry name" value="NagB/RpiA/CoA transferase-like"/>
    <property type="match status" value="1"/>
</dbReference>